<sequence>MAMGLFRVCLVVVTAIINHPLLFPRENATVPENEEEIIRKMQAHQEKLQLEQLRLEEEVARLAAEKEALEQVAEEGRQQNETRVAWDLWSTLCMILFLMIEVWRQDHQEGPSPECLGGEEDELPGLGGAPLQGLTLPNKATLGHFYERCIRGATADAARTREFLEGFVDDLLEALRSLCNRDTDMEVEDFIGVDSMYENWQVDRPLLCHLFVPFTPPEPYRFHPELWCSGRSVPLDRQGYGQIKVVRADGDTLSCICGKTKLGEDMLCLLHGRNSMAPPCGDMENLLCATDSLYLDTMQVMKWFQTALTRAWKGIAHKYEFDLAFGQLDSPGSLKIKFRSGKFMPFNLIPVIQCDDSDLYFVSHLPREPSEGTPASSTDWLLSFAVYERHFLRTTLKALPEGACHLSCLQIASFLLSKQSRLTGPSGLSSYHLKTALLHLLLLRQAADWKAGQLDARLHELLCFLEKSLLQKKLHHFFIGNRKVPEAMGLPEAVLRAEPLNLFRPFVLQRSLYRKTLDSFYEMLKNAPALISEYSLHVPSDQPTPKS</sequence>
<evidence type="ECO:0000250" key="1">
    <source>
        <dbReference type="UniProtKB" id="Q3TNL8"/>
    </source>
</evidence>
<evidence type="ECO:0000255" key="2"/>
<evidence type="ECO:0000256" key="3">
    <source>
        <dbReference type="SAM" id="MobiDB-lite"/>
    </source>
</evidence>
<evidence type="ECO:0000269" key="4">
    <source>
    </source>
</evidence>
<evidence type="ECO:0000305" key="5"/>
<evidence type="ECO:0007744" key="6">
    <source>
    </source>
</evidence>
<feature type="signal peptide" evidence="2">
    <location>
        <begin position="1"/>
        <end position="15"/>
    </location>
</feature>
<feature type="chain" id="PRO_0000293728" description="Inositol 1,4,5-trisphosphate receptor-interacting protein">
    <location>
        <begin position="16"/>
        <end position="547"/>
    </location>
</feature>
<feature type="topological domain" description="Extracellular" evidence="2">
    <location>
        <begin position="16"/>
        <end position="83"/>
    </location>
</feature>
<feature type="transmembrane region" description="Helical" evidence="2">
    <location>
        <begin position="84"/>
        <end position="100"/>
    </location>
</feature>
<feature type="topological domain" description="Cytoplasmic" evidence="2">
    <location>
        <begin position="101"/>
        <end position="547"/>
    </location>
</feature>
<feature type="region of interest" description="Disordered" evidence="3">
    <location>
        <begin position="109"/>
        <end position="129"/>
    </location>
</feature>
<feature type="coiled-coil region" evidence="2">
    <location>
        <begin position="32"/>
        <end position="82"/>
    </location>
</feature>
<feature type="modified residue" description="Phosphoserine" evidence="6">
    <location>
        <position position="547"/>
    </location>
</feature>
<feature type="glycosylation site" description="N-linked (GlcNAc...) asparagine" evidence="2">
    <location>
        <position position="27"/>
    </location>
</feature>
<feature type="glycosylation site" description="N-linked (GlcNAc...) asparagine" evidence="2">
    <location>
        <position position="80"/>
    </location>
</feature>
<organism>
    <name type="scientific">Homo sapiens</name>
    <name type="common">Human</name>
    <dbReference type="NCBI Taxonomy" id="9606"/>
    <lineage>
        <taxon>Eukaryota</taxon>
        <taxon>Metazoa</taxon>
        <taxon>Chordata</taxon>
        <taxon>Craniata</taxon>
        <taxon>Vertebrata</taxon>
        <taxon>Euteleostomi</taxon>
        <taxon>Mammalia</taxon>
        <taxon>Eutheria</taxon>
        <taxon>Euarchontoglires</taxon>
        <taxon>Primates</taxon>
        <taxon>Haplorrhini</taxon>
        <taxon>Catarrhini</taxon>
        <taxon>Hominidae</taxon>
        <taxon>Homo</taxon>
    </lineage>
</organism>
<dbReference type="EMBL" id="AB051541">
    <property type="protein sequence ID" value="BAB21845.1"/>
    <property type="status" value="ALT_INIT"/>
    <property type="molecule type" value="mRNA"/>
</dbReference>
<dbReference type="EMBL" id="AK056526">
    <property type="protein sequence ID" value="BAB71204.1"/>
    <property type="molecule type" value="mRNA"/>
</dbReference>
<dbReference type="EMBL" id="AL162742">
    <property type="status" value="NOT_ANNOTATED_CDS"/>
    <property type="molecule type" value="Genomic_DNA"/>
</dbReference>
<dbReference type="EMBL" id="CH471066">
    <property type="protein sequence ID" value="EAW49596.1"/>
    <property type="molecule type" value="Genomic_DNA"/>
</dbReference>
<dbReference type="EMBL" id="CH471066">
    <property type="protein sequence ID" value="EAW49597.1"/>
    <property type="molecule type" value="Genomic_DNA"/>
</dbReference>
<dbReference type="EMBL" id="BC040536">
    <property type="protein sequence ID" value="AAH40536.1"/>
    <property type="molecule type" value="mRNA"/>
</dbReference>
<dbReference type="EMBL" id="BC070108">
    <property type="protein sequence ID" value="AAH70108.1"/>
    <property type="molecule type" value="mRNA"/>
</dbReference>
<dbReference type="CCDS" id="CCDS7557.1"/>
<dbReference type="RefSeq" id="NP_001258941.1">
    <property type="nucleotide sequence ID" value="NM_001272012.2"/>
</dbReference>
<dbReference type="RefSeq" id="NP_001258942.1">
    <property type="nucleotide sequence ID" value="NM_001272013.2"/>
</dbReference>
<dbReference type="RefSeq" id="NP_203755.1">
    <property type="nucleotide sequence ID" value="NM_033397.4"/>
</dbReference>
<dbReference type="BioGRID" id="124535">
    <property type="interactions" value="67"/>
</dbReference>
<dbReference type="FunCoup" id="Q8IWB1">
    <property type="interactions" value="541"/>
</dbReference>
<dbReference type="IntAct" id="Q8IWB1">
    <property type="interactions" value="47"/>
</dbReference>
<dbReference type="MINT" id="Q8IWB1"/>
<dbReference type="STRING" id="9606.ENSP00000278071"/>
<dbReference type="GlyCosmos" id="Q8IWB1">
    <property type="glycosylation" value="2 sites, No reported glycans"/>
</dbReference>
<dbReference type="GlyGen" id="Q8IWB1">
    <property type="glycosylation" value="4 sites, 3 N-linked glycans (1 site), 1 O-linked glycan (1 site)"/>
</dbReference>
<dbReference type="iPTMnet" id="Q8IWB1"/>
<dbReference type="PhosphoSitePlus" id="Q8IWB1"/>
<dbReference type="BioMuta" id="ITPRIP"/>
<dbReference type="DMDM" id="74750704"/>
<dbReference type="jPOST" id="Q8IWB1"/>
<dbReference type="MassIVE" id="Q8IWB1"/>
<dbReference type="PaxDb" id="9606-ENSP00000278071"/>
<dbReference type="PeptideAtlas" id="Q8IWB1"/>
<dbReference type="ProteomicsDB" id="70833"/>
<dbReference type="Pumba" id="Q8IWB1"/>
<dbReference type="TopDownProteomics" id="Q8IWB1"/>
<dbReference type="Antibodypedia" id="48978">
    <property type="antibodies" value="43 antibodies from 15 providers"/>
</dbReference>
<dbReference type="DNASU" id="85450"/>
<dbReference type="Ensembl" id="ENST00000278071.6">
    <property type="protein sequence ID" value="ENSP00000278071.2"/>
    <property type="gene ID" value="ENSG00000148841.17"/>
</dbReference>
<dbReference type="Ensembl" id="ENST00000337478.3">
    <property type="protein sequence ID" value="ENSP00000337178.1"/>
    <property type="gene ID" value="ENSG00000148841.17"/>
</dbReference>
<dbReference type="Ensembl" id="ENST00000358187.2">
    <property type="protein sequence ID" value="ENSP00000350915.2"/>
    <property type="gene ID" value="ENSG00000148841.17"/>
</dbReference>
<dbReference type="Ensembl" id="ENST00000647721.1">
    <property type="protein sequence ID" value="ENSP00000497746.1"/>
    <property type="gene ID" value="ENSG00000148841.17"/>
</dbReference>
<dbReference type="GeneID" id="85450"/>
<dbReference type="KEGG" id="hsa:85450"/>
<dbReference type="MANE-Select" id="ENST00000337478.3">
    <property type="protein sequence ID" value="ENSP00000337178.1"/>
    <property type="RefSeq nucleotide sequence ID" value="NM_001272013.2"/>
    <property type="RefSeq protein sequence ID" value="NP_001258942.1"/>
</dbReference>
<dbReference type="UCSC" id="uc001kye.5">
    <property type="organism name" value="human"/>
</dbReference>
<dbReference type="AGR" id="HGNC:29370"/>
<dbReference type="CTD" id="85450"/>
<dbReference type="DisGeNET" id="85450"/>
<dbReference type="GeneCards" id="ITPRIP"/>
<dbReference type="HGNC" id="HGNC:29370">
    <property type="gene designation" value="ITPRIP"/>
</dbReference>
<dbReference type="HPA" id="ENSG00000148841">
    <property type="expression patterns" value="Tissue enhanced (bone)"/>
</dbReference>
<dbReference type="MIM" id="620205">
    <property type="type" value="gene"/>
</dbReference>
<dbReference type="neXtProt" id="NX_Q8IWB1"/>
<dbReference type="OpenTargets" id="ENSG00000148841"/>
<dbReference type="PharmGKB" id="PA162392344"/>
<dbReference type="VEuPathDB" id="HostDB:ENSG00000148841"/>
<dbReference type="eggNOG" id="ENOG502QRDF">
    <property type="taxonomic scope" value="Eukaryota"/>
</dbReference>
<dbReference type="GeneTree" id="ENSGT01050000244827"/>
<dbReference type="HOGENOM" id="CLU_025485_2_0_1"/>
<dbReference type="InParanoid" id="Q8IWB1"/>
<dbReference type="OMA" id="CHLHCLQ"/>
<dbReference type="OrthoDB" id="9923553at2759"/>
<dbReference type="PAN-GO" id="Q8IWB1">
    <property type="GO annotations" value="2 GO annotations based on evolutionary models"/>
</dbReference>
<dbReference type="PhylomeDB" id="Q8IWB1"/>
<dbReference type="TreeFam" id="TF332277"/>
<dbReference type="PathwayCommons" id="Q8IWB1"/>
<dbReference type="SignaLink" id="Q8IWB1"/>
<dbReference type="BioGRID-ORCS" id="85450">
    <property type="hits" value="18 hits in 1157 CRISPR screens"/>
</dbReference>
<dbReference type="ChiTaRS" id="ITPRIP">
    <property type="organism name" value="human"/>
</dbReference>
<dbReference type="GenomeRNAi" id="85450"/>
<dbReference type="Pharos" id="Q8IWB1">
    <property type="development level" value="Tbio"/>
</dbReference>
<dbReference type="PRO" id="PR:Q8IWB1"/>
<dbReference type="Proteomes" id="UP000005640">
    <property type="component" value="Chromosome 10"/>
</dbReference>
<dbReference type="RNAct" id="Q8IWB1">
    <property type="molecule type" value="protein"/>
</dbReference>
<dbReference type="Bgee" id="ENSG00000148841">
    <property type="expression patterns" value="Expressed in stromal cell of endometrium and 112 other cell types or tissues"/>
</dbReference>
<dbReference type="ExpressionAtlas" id="Q8IWB1">
    <property type="expression patterns" value="baseline and differential"/>
</dbReference>
<dbReference type="GO" id="GO:0016020">
    <property type="term" value="C:membrane"/>
    <property type="evidence" value="ECO:0007005"/>
    <property type="project" value="UniProtKB"/>
</dbReference>
<dbReference type="GO" id="GO:0005640">
    <property type="term" value="C:nuclear outer membrane"/>
    <property type="evidence" value="ECO:0000250"/>
    <property type="project" value="UniProtKB"/>
</dbReference>
<dbReference type="GO" id="GO:0005886">
    <property type="term" value="C:plasma membrane"/>
    <property type="evidence" value="ECO:0007669"/>
    <property type="project" value="UniProtKB-SubCell"/>
</dbReference>
<dbReference type="GO" id="GO:0004860">
    <property type="term" value="F:protein kinase inhibitor activity"/>
    <property type="evidence" value="ECO:0000318"/>
    <property type="project" value="GO_Central"/>
</dbReference>
<dbReference type="GO" id="GO:0008625">
    <property type="term" value="P:extrinsic apoptotic signaling pathway via death domain receptors"/>
    <property type="evidence" value="ECO:0007669"/>
    <property type="project" value="Ensembl"/>
</dbReference>
<dbReference type="GO" id="GO:1902042">
    <property type="term" value="P:negative regulation of extrinsic apoptotic signaling pathway via death domain receptors"/>
    <property type="evidence" value="ECO:0007669"/>
    <property type="project" value="Ensembl"/>
</dbReference>
<dbReference type="FunFam" id="1.10.1410.40:FF:000006">
    <property type="entry name" value="Inositol 1,4,5-trisphosphate receptor-interacting protein"/>
    <property type="match status" value="1"/>
</dbReference>
<dbReference type="Gene3D" id="1.10.1410.40">
    <property type="match status" value="1"/>
</dbReference>
<dbReference type="InterPro" id="IPR026250">
    <property type="entry name" value="ITPRIP-like"/>
</dbReference>
<dbReference type="InterPro" id="IPR046906">
    <property type="entry name" value="Mab-21_HhH/H2TH-like"/>
</dbReference>
<dbReference type="InterPro" id="IPR024810">
    <property type="entry name" value="MAB21L/cGLR"/>
</dbReference>
<dbReference type="PANTHER" id="PTHR10656">
    <property type="entry name" value="CELL FATE DETERMINING PROTEIN MAB21-RELATED"/>
    <property type="match status" value="1"/>
</dbReference>
<dbReference type="PANTHER" id="PTHR10656:SF8">
    <property type="entry name" value="INOSITOL 1,4,5-TRISPHOSPHATE RECEPTOR-INTERACTING PROTEIN"/>
    <property type="match status" value="1"/>
</dbReference>
<dbReference type="Pfam" id="PF20266">
    <property type="entry name" value="Mab-21_C"/>
    <property type="match status" value="1"/>
</dbReference>
<dbReference type="PRINTS" id="PR02107">
    <property type="entry name" value="INOS145TPRIP"/>
</dbReference>
<dbReference type="SMART" id="SM01265">
    <property type="entry name" value="Mab-21"/>
    <property type="match status" value="1"/>
</dbReference>
<protein>
    <recommendedName>
        <fullName>Inositol 1,4,5-trisphosphate receptor-interacting protein</fullName>
    </recommendedName>
    <alternativeName>
        <fullName>Protein DANGER</fullName>
    </alternativeName>
</protein>
<accession>Q8IWB1</accession>
<accession>D3DRA5</accession>
<accession>Q5JU17</accession>
<accession>Q96MS8</accession>
<accession>Q9C0A9</accession>
<gene>
    <name type="primary">ITPRIP</name>
    <name type="synonym">DANGER</name>
    <name type="synonym">KIAA1754</name>
</gene>
<name>IPRI_HUMAN</name>
<keyword id="KW-1003">Cell membrane</keyword>
<keyword id="KW-0175">Coiled coil</keyword>
<keyword id="KW-0325">Glycoprotein</keyword>
<keyword id="KW-0472">Membrane</keyword>
<keyword id="KW-0539">Nucleus</keyword>
<keyword id="KW-0597">Phosphoprotein</keyword>
<keyword id="KW-1267">Proteomics identification</keyword>
<keyword id="KW-1185">Reference proteome</keyword>
<keyword id="KW-0732">Signal</keyword>
<keyword id="KW-0812">Transmembrane</keyword>
<keyword id="KW-1133">Transmembrane helix</keyword>
<reference key="1">
    <citation type="journal article" date="2000" name="DNA Res.">
        <title>Prediction of the coding sequences of unidentified human genes. XIX. The complete sequences of 100 new cDNA clones from brain which code for large proteins in vitro.</title>
        <authorList>
            <person name="Nagase T."/>
            <person name="Kikuno R."/>
            <person name="Hattori A."/>
            <person name="Kondo Y."/>
            <person name="Okumura K."/>
            <person name="Ohara O."/>
        </authorList>
    </citation>
    <scope>NUCLEOTIDE SEQUENCE [LARGE SCALE MRNA]</scope>
    <source>
        <tissue>Brain</tissue>
    </source>
</reference>
<reference key="2">
    <citation type="journal article" date="2004" name="Nat. Genet.">
        <title>Complete sequencing and characterization of 21,243 full-length human cDNAs.</title>
        <authorList>
            <person name="Ota T."/>
            <person name="Suzuki Y."/>
            <person name="Nishikawa T."/>
            <person name="Otsuki T."/>
            <person name="Sugiyama T."/>
            <person name="Irie R."/>
            <person name="Wakamatsu A."/>
            <person name="Hayashi K."/>
            <person name="Sato H."/>
            <person name="Nagai K."/>
            <person name="Kimura K."/>
            <person name="Makita H."/>
            <person name="Sekine M."/>
            <person name="Obayashi M."/>
            <person name="Nishi T."/>
            <person name="Shibahara T."/>
            <person name="Tanaka T."/>
            <person name="Ishii S."/>
            <person name="Yamamoto J."/>
            <person name="Saito K."/>
            <person name="Kawai Y."/>
            <person name="Isono Y."/>
            <person name="Nakamura Y."/>
            <person name="Nagahari K."/>
            <person name="Murakami K."/>
            <person name="Yasuda T."/>
            <person name="Iwayanagi T."/>
            <person name="Wagatsuma M."/>
            <person name="Shiratori A."/>
            <person name="Sudo H."/>
            <person name="Hosoiri T."/>
            <person name="Kaku Y."/>
            <person name="Kodaira H."/>
            <person name="Kondo H."/>
            <person name="Sugawara M."/>
            <person name="Takahashi M."/>
            <person name="Kanda K."/>
            <person name="Yokoi T."/>
            <person name="Furuya T."/>
            <person name="Kikkawa E."/>
            <person name="Omura Y."/>
            <person name="Abe K."/>
            <person name="Kamihara K."/>
            <person name="Katsuta N."/>
            <person name="Sato K."/>
            <person name="Tanikawa M."/>
            <person name="Yamazaki M."/>
            <person name="Ninomiya K."/>
            <person name="Ishibashi T."/>
            <person name="Yamashita H."/>
            <person name="Murakawa K."/>
            <person name="Fujimori K."/>
            <person name="Tanai H."/>
            <person name="Kimata M."/>
            <person name="Watanabe M."/>
            <person name="Hiraoka S."/>
            <person name="Chiba Y."/>
            <person name="Ishida S."/>
            <person name="Ono Y."/>
            <person name="Takiguchi S."/>
            <person name="Watanabe S."/>
            <person name="Yosida M."/>
            <person name="Hotuta T."/>
            <person name="Kusano J."/>
            <person name="Kanehori K."/>
            <person name="Takahashi-Fujii A."/>
            <person name="Hara H."/>
            <person name="Tanase T.-O."/>
            <person name="Nomura Y."/>
            <person name="Togiya S."/>
            <person name="Komai F."/>
            <person name="Hara R."/>
            <person name="Takeuchi K."/>
            <person name="Arita M."/>
            <person name="Imose N."/>
            <person name="Musashino K."/>
            <person name="Yuuki H."/>
            <person name="Oshima A."/>
            <person name="Sasaki N."/>
            <person name="Aotsuka S."/>
            <person name="Yoshikawa Y."/>
            <person name="Matsunawa H."/>
            <person name="Ichihara T."/>
            <person name="Shiohata N."/>
            <person name="Sano S."/>
            <person name="Moriya S."/>
            <person name="Momiyama H."/>
            <person name="Satoh N."/>
            <person name="Takami S."/>
            <person name="Terashima Y."/>
            <person name="Suzuki O."/>
            <person name="Nakagawa S."/>
            <person name="Senoh A."/>
            <person name="Mizoguchi H."/>
            <person name="Goto Y."/>
            <person name="Shimizu F."/>
            <person name="Wakebe H."/>
            <person name="Hishigaki H."/>
            <person name="Watanabe T."/>
            <person name="Sugiyama A."/>
            <person name="Takemoto M."/>
            <person name="Kawakami B."/>
            <person name="Yamazaki M."/>
            <person name="Watanabe K."/>
            <person name="Kumagai A."/>
            <person name="Itakura S."/>
            <person name="Fukuzumi Y."/>
            <person name="Fujimori Y."/>
            <person name="Komiyama M."/>
            <person name="Tashiro H."/>
            <person name="Tanigami A."/>
            <person name="Fujiwara T."/>
            <person name="Ono T."/>
            <person name="Yamada K."/>
            <person name="Fujii Y."/>
            <person name="Ozaki K."/>
            <person name="Hirao M."/>
            <person name="Ohmori Y."/>
            <person name="Kawabata A."/>
            <person name="Hikiji T."/>
            <person name="Kobatake N."/>
            <person name="Inagaki H."/>
            <person name="Ikema Y."/>
            <person name="Okamoto S."/>
            <person name="Okitani R."/>
            <person name="Kawakami T."/>
            <person name="Noguchi S."/>
            <person name="Itoh T."/>
            <person name="Shigeta K."/>
            <person name="Senba T."/>
            <person name="Matsumura K."/>
            <person name="Nakajima Y."/>
            <person name="Mizuno T."/>
            <person name="Morinaga M."/>
            <person name="Sasaki M."/>
            <person name="Togashi T."/>
            <person name="Oyama M."/>
            <person name="Hata H."/>
            <person name="Watanabe M."/>
            <person name="Komatsu T."/>
            <person name="Mizushima-Sugano J."/>
            <person name="Satoh T."/>
            <person name="Shirai Y."/>
            <person name="Takahashi Y."/>
            <person name="Nakagawa K."/>
            <person name="Okumura K."/>
            <person name="Nagase T."/>
            <person name="Nomura N."/>
            <person name="Kikuchi H."/>
            <person name="Masuho Y."/>
            <person name="Yamashita R."/>
            <person name="Nakai K."/>
            <person name="Yada T."/>
            <person name="Nakamura Y."/>
            <person name="Ohara O."/>
            <person name="Isogai T."/>
            <person name="Sugano S."/>
        </authorList>
    </citation>
    <scope>NUCLEOTIDE SEQUENCE [LARGE SCALE MRNA]</scope>
    <source>
        <tissue>Teratocarcinoma</tissue>
    </source>
</reference>
<reference key="3">
    <citation type="journal article" date="2004" name="Nature">
        <title>The DNA sequence and comparative analysis of human chromosome 10.</title>
        <authorList>
            <person name="Deloukas P."/>
            <person name="Earthrowl M.E."/>
            <person name="Grafham D.V."/>
            <person name="Rubenfield M."/>
            <person name="French L."/>
            <person name="Steward C.A."/>
            <person name="Sims S.K."/>
            <person name="Jones M.C."/>
            <person name="Searle S."/>
            <person name="Scott C."/>
            <person name="Howe K."/>
            <person name="Hunt S.E."/>
            <person name="Andrews T.D."/>
            <person name="Gilbert J.G.R."/>
            <person name="Swarbreck D."/>
            <person name="Ashurst J.L."/>
            <person name="Taylor A."/>
            <person name="Battles J."/>
            <person name="Bird C.P."/>
            <person name="Ainscough R."/>
            <person name="Almeida J.P."/>
            <person name="Ashwell R.I.S."/>
            <person name="Ambrose K.D."/>
            <person name="Babbage A.K."/>
            <person name="Bagguley C.L."/>
            <person name="Bailey J."/>
            <person name="Banerjee R."/>
            <person name="Bates K."/>
            <person name="Beasley H."/>
            <person name="Bray-Allen S."/>
            <person name="Brown A.J."/>
            <person name="Brown J.Y."/>
            <person name="Burford D.C."/>
            <person name="Burrill W."/>
            <person name="Burton J."/>
            <person name="Cahill P."/>
            <person name="Camire D."/>
            <person name="Carter N.P."/>
            <person name="Chapman J.C."/>
            <person name="Clark S.Y."/>
            <person name="Clarke G."/>
            <person name="Clee C.M."/>
            <person name="Clegg S."/>
            <person name="Corby N."/>
            <person name="Coulson A."/>
            <person name="Dhami P."/>
            <person name="Dutta I."/>
            <person name="Dunn M."/>
            <person name="Faulkner L."/>
            <person name="Frankish A."/>
            <person name="Frankland J.A."/>
            <person name="Garner P."/>
            <person name="Garnett J."/>
            <person name="Gribble S."/>
            <person name="Griffiths C."/>
            <person name="Grocock R."/>
            <person name="Gustafson E."/>
            <person name="Hammond S."/>
            <person name="Harley J.L."/>
            <person name="Hart E."/>
            <person name="Heath P.D."/>
            <person name="Ho T.P."/>
            <person name="Hopkins B."/>
            <person name="Horne J."/>
            <person name="Howden P.J."/>
            <person name="Huckle E."/>
            <person name="Hynds C."/>
            <person name="Johnson C."/>
            <person name="Johnson D."/>
            <person name="Kana A."/>
            <person name="Kay M."/>
            <person name="Kimberley A.M."/>
            <person name="Kershaw J.K."/>
            <person name="Kokkinaki M."/>
            <person name="Laird G.K."/>
            <person name="Lawlor S."/>
            <person name="Lee H.M."/>
            <person name="Leongamornlert D.A."/>
            <person name="Laird G."/>
            <person name="Lloyd C."/>
            <person name="Lloyd D.M."/>
            <person name="Loveland J."/>
            <person name="Lovell J."/>
            <person name="McLaren S."/>
            <person name="McLay K.E."/>
            <person name="McMurray A."/>
            <person name="Mashreghi-Mohammadi M."/>
            <person name="Matthews L."/>
            <person name="Milne S."/>
            <person name="Nickerson T."/>
            <person name="Nguyen M."/>
            <person name="Overton-Larty E."/>
            <person name="Palmer S.A."/>
            <person name="Pearce A.V."/>
            <person name="Peck A.I."/>
            <person name="Pelan S."/>
            <person name="Phillimore B."/>
            <person name="Porter K."/>
            <person name="Rice C.M."/>
            <person name="Rogosin A."/>
            <person name="Ross M.T."/>
            <person name="Sarafidou T."/>
            <person name="Sehra H.K."/>
            <person name="Shownkeen R."/>
            <person name="Skuce C.D."/>
            <person name="Smith M."/>
            <person name="Standring L."/>
            <person name="Sycamore N."/>
            <person name="Tester J."/>
            <person name="Thorpe A."/>
            <person name="Torcasso W."/>
            <person name="Tracey A."/>
            <person name="Tromans A."/>
            <person name="Tsolas J."/>
            <person name="Wall M."/>
            <person name="Walsh J."/>
            <person name="Wang H."/>
            <person name="Weinstock K."/>
            <person name="West A.P."/>
            <person name="Willey D.L."/>
            <person name="Whitehead S.L."/>
            <person name="Wilming L."/>
            <person name="Wray P.W."/>
            <person name="Young L."/>
            <person name="Chen Y."/>
            <person name="Lovering R.C."/>
            <person name="Moschonas N.K."/>
            <person name="Siebert R."/>
            <person name="Fechtel K."/>
            <person name="Bentley D."/>
            <person name="Durbin R.M."/>
            <person name="Hubbard T."/>
            <person name="Doucette-Stamm L."/>
            <person name="Beck S."/>
            <person name="Smith D.R."/>
            <person name="Rogers J."/>
        </authorList>
    </citation>
    <scope>NUCLEOTIDE SEQUENCE [LARGE SCALE GENOMIC DNA]</scope>
</reference>
<reference key="4">
    <citation type="submission" date="2005-09" db="EMBL/GenBank/DDBJ databases">
        <authorList>
            <person name="Mural R.J."/>
            <person name="Istrail S."/>
            <person name="Sutton G.G."/>
            <person name="Florea L."/>
            <person name="Halpern A.L."/>
            <person name="Mobarry C.M."/>
            <person name="Lippert R."/>
            <person name="Walenz B."/>
            <person name="Shatkay H."/>
            <person name="Dew I."/>
            <person name="Miller J.R."/>
            <person name="Flanigan M.J."/>
            <person name="Edwards N.J."/>
            <person name="Bolanos R."/>
            <person name="Fasulo D."/>
            <person name="Halldorsson B.V."/>
            <person name="Hannenhalli S."/>
            <person name="Turner R."/>
            <person name="Yooseph S."/>
            <person name="Lu F."/>
            <person name="Nusskern D.R."/>
            <person name="Shue B.C."/>
            <person name="Zheng X.H."/>
            <person name="Zhong F."/>
            <person name="Delcher A.L."/>
            <person name="Huson D.H."/>
            <person name="Kravitz S.A."/>
            <person name="Mouchard L."/>
            <person name="Reinert K."/>
            <person name="Remington K.A."/>
            <person name="Clark A.G."/>
            <person name="Waterman M.S."/>
            <person name="Eichler E.E."/>
            <person name="Adams M.D."/>
            <person name="Hunkapiller M.W."/>
            <person name="Myers E.W."/>
            <person name="Venter J.C."/>
        </authorList>
    </citation>
    <scope>NUCLEOTIDE SEQUENCE [LARGE SCALE GENOMIC DNA]</scope>
</reference>
<reference key="5">
    <citation type="journal article" date="2004" name="Genome Res.">
        <title>The status, quality, and expansion of the NIH full-length cDNA project: the Mammalian Gene Collection (MGC).</title>
        <authorList>
            <consortium name="The MGC Project Team"/>
        </authorList>
    </citation>
    <scope>NUCLEOTIDE SEQUENCE [LARGE SCALE MRNA]</scope>
    <source>
        <tissue>Testis</tissue>
    </source>
</reference>
<reference key="6">
    <citation type="journal article" date="2006" name="J. Biol. Chem.">
        <title>DANGER, a novel regulatory protein of inositol 1,4,5-trisphosphate-receptor activity.</title>
        <authorList>
            <person name="van Rossum D.B."/>
            <person name="Patterson R.L."/>
            <person name="Cheung K.-H."/>
            <person name="Barrow R.K."/>
            <person name="Syrovatkina V."/>
            <person name="Gessell G.S."/>
            <person name="Burkholder S.G."/>
            <person name="Watkins D.N."/>
            <person name="Foskett J.K."/>
            <person name="Snyder S.H."/>
        </authorList>
    </citation>
    <scope>FUNCTION</scope>
    <scope>SUBUNIT</scope>
    <scope>SUBCELLULAR LOCATION</scope>
    <scope>TISSUE SPECIFICITY</scope>
</reference>
<reference key="7">
    <citation type="journal article" date="2008" name="Proc. Natl. Acad. Sci. U.S.A.">
        <title>A quantitative atlas of mitotic phosphorylation.</title>
        <authorList>
            <person name="Dephoure N."/>
            <person name="Zhou C."/>
            <person name="Villen J."/>
            <person name="Beausoleil S.A."/>
            <person name="Bakalarski C.E."/>
            <person name="Elledge S.J."/>
            <person name="Gygi S.P."/>
        </authorList>
    </citation>
    <scope>PHOSPHORYLATION [LARGE SCALE ANALYSIS] AT SER-547</scope>
    <scope>IDENTIFICATION BY MASS SPECTROMETRY [LARGE SCALE ANALYSIS]</scope>
    <source>
        <tissue>Cervix carcinoma</tissue>
    </source>
</reference>
<proteinExistence type="evidence at protein level"/>
<comment type="function">
    <text evidence="4">Enhances Ca(2+)-mediated inhibition of inositol 1,4,5-triphosphate receptor (ITPR) Ca(2+) release.</text>
</comment>
<comment type="subunit">
    <text evidence="4">Interacts with ITPR.</text>
</comment>
<comment type="interaction">
    <interactant intactId="EBI-2556412">
        <id>Q8IWB1</id>
    </interactant>
    <interactant intactId="EBI-16423037">
        <id>Q9NZ94-2</id>
        <label>NLGN3</label>
    </interactant>
    <organismsDiffer>false</organismsDiffer>
    <experiments>5</experiments>
</comment>
<comment type="interaction">
    <interactant intactId="EBI-2556412">
        <id>Q8IWB1</id>
    </interactant>
    <interactant intactId="EBI-1050125">
        <id>O15173</id>
        <label>PGRMC2</label>
    </interactant>
    <organismsDiffer>false</organismsDiffer>
    <experiments>4</experiments>
</comment>
<comment type="interaction">
    <interactant intactId="EBI-2556412">
        <id>Q8IWB1</id>
    </interactant>
    <interactant intactId="EBI-2845202">
        <id>Q86WH2</id>
        <label>RASSF3</label>
    </interactant>
    <organismsDiffer>false</organismsDiffer>
    <experiments>3</experiments>
</comment>
<comment type="interaction">
    <interactant intactId="EBI-2556412">
        <id>Q8IWB1</id>
    </interactant>
    <interactant intactId="EBI-744081">
        <id>Q96EQ0</id>
        <label>SGTB</label>
    </interactant>
    <organismsDiffer>false</organismsDiffer>
    <experiments>3</experiments>
</comment>
<comment type="subcellular location">
    <subcellularLocation>
        <location evidence="4">Cell membrane</location>
        <topology>Single-pass type I membrane protein</topology>
    </subcellularLocation>
    <subcellularLocation>
        <location evidence="1">Nucleus outer membrane</location>
        <topology evidence="2">Single-pass type I membrane protein</topology>
    </subcellularLocation>
</comment>
<comment type="tissue specificity">
    <text evidence="4">Detected in brain where it is concentrated in cerebellar Purkinje cells (at protein level).</text>
</comment>
<comment type="similarity">
    <text evidence="5">Belongs to the ITPRIP family.</text>
</comment>
<comment type="sequence caution" evidence="5">
    <conflict type="erroneous initiation">
        <sequence resource="EMBL-CDS" id="BAB21845"/>
    </conflict>
</comment>